<accession>O88446</accession>
<reference evidence="15" key="1">
    <citation type="journal article" date="1998" name="J. Biol. Chem.">
        <title>Cloning and functional characterization of a potential-sensitive, polyspecific organic cation transporter (OCT3) most abundantly expressed in placenta.</title>
        <authorList>
            <person name="Kekuda R."/>
            <person name="Prasad P.D."/>
            <person name="Wu X."/>
            <person name="Wang H."/>
            <person name="Fei Y.-J."/>
            <person name="Leibach F.H."/>
            <person name="Ganapathy V."/>
        </authorList>
    </citation>
    <scope>NUCLEOTIDE SEQUENCE [MRNA]</scope>
    <scope>FUNCTION</scope>
    <scope>TISSUE SPECIFICITY</scope>
    <source>
        <tissue>Placenta</tissue>
    </source>
</reference>
<reference evidence="15" key="2">
    <citation type="journal article" date="1998" name="J. Biol. Chem.">
        <title>Identity of the organic cation transporter OCT3 as the extraneuronal monoamine transporter (uptake2) and evidence for the expression of the transporter in the brain.</title>
        <authorList>
            <person name="Wu X."/>
            <person name="Kekuda R."/>
            <person name="Huang W."/>
            <person name="Fei Y.-J."/>
            <person name="Leibach F.H."/>
            <person name="Chen J."/>
            <person name="Conway S.J."/>
            <person name="Ganapathy V."/>
        </authorList>
    </citation>
    <scope>FUNCTION</scope>
    <scope>BIOPHYSICOCHEMICAL PROPERTIES</scope>
    <scope>TISSUE SPECIFICITY</scope>
    <scope>MISCELLANEOUS</scope>
    <source>
        <tissue>Placenta</tissue>
    </source>
</reference>
<reference key="3">
    <citation type="journal article" date="2003" name="J. Pharmacol. Exp. Ther.">
        <title>Agmatine is efficiently transported by non-neuronal monoamine transporters extraneuronal monoamine transporter (EMT) and organic cation transporter 2 (OCT2).</title>
        <authorList>
            <person name="Grundemann D."/>
            <person name="Hahne C."/>
            <person name="Berkels R."/>
            <person name="Schomig E."/>
        </authorList>
    </citation>
    <scope>FUNCTION</scope>
    <scope>TRANSPORTER ACTIVITY</scope>
    <scope>BIOPHYSICOCHEMICAL PROPERTIES</scope>
    <scope>MISCELLANEOUS</scope>
</reference>
<reference key="4">
    <citation type="journal article" date="2005" name="Am. J. Respir. Cell Mol. Biol.">
        <title>Polyspecific cation transporters mediate luminal release of acetylcholine from bronchial epithelium.</title>
        <authorList>
            <person name="Lips K.S."/>
            <person name="Volk C."/>
            <person name="Schmitt B.M."/>
            <person name="Pfeil U."/>
            <person name="Arndt P."/>
            <person name="Miska D."/>
            <person name="Ermert L."/>
            <person name="Kummer W."/>
            <person name="Koepsell H."/>
        </authorList>
    </citation>
    <scope>SUBCELLULAR LOCATION</scope>
    <scope>TISSUE SPECIFICITY</scope>
</reference>
<reference key="5">
    <citation type="journal article" date="2006" name="Neuropharmacology">
        <title>Differential pharmacological in vitro properties of organic cation transporters and regional distribution in rat brain.</title>
        <authorList>
            <person name="Amphoux A."/>
            <person name="Vialou V."/>
            <person name="Drescher E."/>
            <person name="Bruess M."/>
            <person name="Mannoury La Cour C."/>
            <person name="Rochat C."/>
            <person name="Millan M.J."/>
            <person name="Giros B."/>
            <person name="Boenisch H."/>
            <person name="Gautron S."/>
        </authorList>
    </citation>
    <scope>FUNCTION</scope>
    <scope>TRANSPORTER ACTIVITY</scope>
    <scope>BIOPHYSICOCHEMICAL PROPERTIES</scope>
    <scope>TISSUE SPECIFICITY</scope>
    <scope>MISCELLANEOUS</scope>
</reference>
<reference key="6">
    <citation type="journal article" date="2007" name="Mol. Pharm.">
        <title>Transport of organic cations across the blood-testis barrier.</title>
        <authorList>
            <person name="Maeda T."/>
            <person name="Goto A."/>
            <person name="Kobayashi D."/>
            <person name="Tamai I."/>
        </authorList>
    </citation>
    <scope>FUNCTION</scope>
    <scope>TISSUE SPECIFICITY</scope>
</reference>
<reference key="7">
    <citation type="journal article" date="2008" name="J. Neurochem.">
        <title>Altered aminergic neurotransmission in the brain of organic cation transporter 3-deficient mice.</title>
        <authorList>
            <person name="Vialou V."/>
            <person name="Balasse L."/>
            <person name="Callebert J."/>
            <person name="Launay J.M."/>
            <person name="Giros B."/>
            <person name="Gautron S."/>
        </authorList>
    </citation>
    <scope>MISCELLANEOUS</scope>
</reference>
<reference key="8">
    <citation type="journal article" date="2009" name="Proc. Natl. Acad. Sci. U.S.A.">
        <title>The organic cation transporter-3 is a pivotal modulator of neurodegeneration in the nigrostriatal dopaminergic pathway.</title>
        <authorList>
            <person name="Cui M."/>
            <person name="Aras R."/>
            <person name="Christian W.V."/>
            <person name="Rappold P.M."/>
            <person name="Hatwar M."/>
            <person name="Panza J."/>
            <person name="Jackson-Lewis V."/>
            <person name="Javitch J.A."/>
            <person name="Ballatori N."/>
            <person name="Przedborski S."/>
            <person name="Tieu K."/>
        </authorList>
    </citation>
    <scope>FUNCTION</scope>
    <scope>MISCELLANEOUS</scope>
</reference>
<reference key="9">
    <citation type="journal article" date="2013" name="Mol. Pharm.">
        <title>Polyamine transport by the polyspecific organic cation transporters OCT1, OCT2, and OCT3.</title>
        <authorList>
            <person name="Sala-Rabanal M."/>
            <person name="Li D.C."/>
            <person name="Dake G.R."/>
            <person name="Kurata H.T."/>
            <person name="Inyushin M."/>
            <person name="Skatchkov S.N."/>
            <person name="Nichols C.G."/>
        </authorList>
    </citation>
    <scope>FUNCTION</scope>
    <scope>TRANSPORTER ACTIVITY</scope>
    <scope>MISCELLANEOUS</scope>
</reference>
<reference key="10">
    <citation type="journal article" date="2017" name="Brain Struct. Funct.">
        <title>Organic cation transporter 3 (OCT3) is localized to intracellular and surface membranes in select glial and neuronal cells within the basolateral amygdaloid complex of both rats and mice.</title>
        <authorList>
            <person name="Gasser P.J."/>
            <person name="Hurley M.M."/>
            <person name="Chan J."/>
            <person name="Pickel V.M."/>
        </authorList>
    </citation>
    <scope>FUNCTION</scope>
    <scope>SUBCELLULAR LOCATION</scope>
    <scope>TISSUE SPECIFICITY</scope>
</reference>
<evidence type="ECO:0000250" key="1">
    <source>
        <dbReference type="UniProtKB" id="O75751"/>
    </source>
</evidence>
<evidence type="ECO:0000255" key="2"/>
<evidence type="ECO:0000269" key="3">
    <source>
    </source>
</evidence>
<evidence type="ECO:0000269" key="4">
    <source>
    </source>
</evidence>
<evidence type="ECO:0000269" key="5">
    <source>
    </source>
</evidence>
<evidence type="ECO:0000269" key="6">
    <source>
    </source>
</evidence>
<evidence type="ECO:0000269" key="7">
    <source>
    </source>
</evidence>
<evidence type="ECO:0000269" key="8">
    <source>
    </source>
</evidence>
<evidence type="ECO:0000269" key="9">
    <source>
    </source>
</evidence>
<evidence type="ECO:0000269" key="10">
    <source>
    </source>
</evidence>
<evidence type="ECO:0000269" key="11">
    <source>
    </source>
</evidence>
<evidence type="ECO:0000269" key="12">
    <source>
    </source>
</evidence>
<evidence type="ECO:0000303" key="13">
    <source>
    </source>
</evidence>
<evidence type="ECO:0000303" key="14">
    <source>
    </source>
</evidence>
<evidence type="ECO:0000305" key="15"/>
<evidence type="ECO:0000305" key="16">
    <source>
    </source>
</evidence>
<evidence type="ECO:0000305" key="17">
    <source>
    </source>
</evidence>
<evidence type="ECO:0000312" key="18">
    <source>
        <dbReference type="RGD" id="3701"/>
    </source>
</evidence>
<organism>
    <name type="scientific">Rattus norvegicus</name>
    <name type="common">Rat</name>
    <dbReference type="NCBI Taxonomy" id="10116"/>
    <lineage>
        <taxon>Eukaryota</taxon>
        <taxon>Metazoa</taxon>
        <taxon>Chordata</taxon>
        <taxon>Craniata</taxon>
        <taxon>Vertebrata</taxon>
        <taxon>Euteleostomi</taxon>
        <taxon>Mammalia</taxon>
        <taxon>Eutheria</taxon>
        <taxon>Euarchontoglires</taxon>
        <taxon>Glires</taxon>
        <taxon>Rodentia</taxon>
        <taxon>Myomorpha</taxon>
        <taxon>Muroidea</taxon>
        <taxon>Muridae</taxon>
        <taxon>Murinae</taxon>
        <taxon>Rattus</taxon>
    </lineage>
</organism>
<gene>
    <name evidence="18" type="primary">Slc22a3</name>
    <name type="synonym">Oct3</name>
</gene>
<proteinExistence type="evidence at protein level"/>
<comment type="function">
    <text evidence="1 3 5 6 8 9 10 11 12">Electrogenic voltage-dependent transporter that mediates the transport of a variety of organic cations such as endogenous bioactive amines, cationic drugs and xenobiotics (PubMed:12538837, PubMed:16581093, PubMed:23458604, PubMed:9830022). Cation cellular uptake or release is driven by the electrochemical potential, i.e. membrane potential and concentration gradient (PubMed:9632645, PubMed:9830022). Functions as a Na(+)- and Cl(-)-independent, bidirectional uniporter (PubMed:9830022). Implicated in neuronal monoamine neurotransmitters cellular uptake such as dopamine, adrenaline/epinephrine, noradrenaline/norepinephrine, histamine, serotonin and tyramine, thereby supporting a role in homeostatic regulation of aminergic neurotransmission in the brain (PubMed:16581093, PubMed:19416912, PubMed:9830022). Transports dopaminergic neuromodulators cyclo(his-pro) and salsolinol with low efficiency (By similarity). May be involved in the uptake and disposition of cationic compounds by renal clearance from the blood flow (By similarity). May contribute to regulate the transport of cationic compounds in testis across the blood-testis-barrier (PubMed:17616214). Mediates the transport of polyamine spermidine and putrescine (PubMed:12538837, PubMed:23458604). Mediates the bidirectional transport of polyamine agmatine (PubMed:12538837). Also transports guanidine (PubMed:9632645). May also mediate intracellular transport of organic cations, thereby playing a role in amine metabolism and intracellular signaling (PubMed:27659446).</text>
</comment>
<comment type="catalytic activity">
    <reaction evidence="5">
        <text>(R)-noradrenaline(out) = (R)-noradrenaline(in)</text>
        <dbReference type="Rhea" id="RHEA:73871"/>
        <dbReference type="ChEBI" id="CHEBI:72587"/>
    </reaction>
</comment>
<comment type="catalytic activity">
    <reaction evidence="5">
        <text>(R)-adrenaline(out) = (R)-adrenaline(in)</text>
        <dbReference type="Rhea" id="RHEA:73875"/>
        <dbReference type="ChEBI" id="CHEBI:71406"/>
    </reaction>
</comment>
<comment type="catalytic activity">
    <reaction evidence="5">
        <text>serotonin(out) = serotonin(in)</text>
        <dbReference type="Rhea" id="RHEA:73867"/>
        <dbReference type="ChEBI" id="CHEBI:350546"/>
    </reaction>
</comment>
<comment type="catalytic activity">
    <reaction evidence="5 12">
        <text>dopamine(out) = dopamine(in)</text>
        <dbReference type="Rhea" id="RHEA:73863"/>
        <dbReference type="ChEBI" id="CHEBI:59905"/>
    </reaction>
</comment>
<comment type="catalytic activity">
    <reaction evidence="5">
        <text>histamine(out) = histamine(in)</text>
        <dbReference type="Rhea" id="RHEA:73879"/>
        <dbReference type="ChEBI" id="CHEBI:58432"/>
    </reaction>
</comment>
<comment type="catalytic activity">
    <reaction evidence="1">
        <text>tyramine(in) = tyramine(out)</text>
        <dbReference type="Rhea" id="RHEA:74783"/>
        <dbReference type="ChEBI" id="CHEBI:327995"/>
    </reaction>
</comment>
<comment type="catalytic activity">
    <reaction evidence="1">
        <text>guanidine(out) = guanidine(in)</text>
        <dbReference type="Rhea" id="RHEA:73883"/>
        <dbReference type="ChEBI" id="CHEBI:30087"/>
    </reaction>
</comment>
<comment type="catalytic activity">
    <reaction evidence="3">
        <text>agmatine(out) = agmatine(in)</text>
        <dbReference type="Rhea" id="RHEA:72131"/>
        <dbReference type="ChEBI" id="CHEBI:58145"/>
    </reaction>
</comment>
<comment type="catalytic activity">
    <reaction evidence="16">
        <text>spermidine(in) = spermidine(out)</text>
        <dbReference type="Rhea" id="RHEA:35039"/>
        <dbReference type="ChEBI" id="CHEBI:57834"/>
    </reaction>
</comment>
<comment type="catalytic activity">
    <reaction evidence="1">
        <text>L-histidyl-L-proline diketopiperazine(in) = L-histidyl-L-proline diketopiperazine(out)</text>
        <dbReference type="Rhea" id="RHEA:74787"/>
        <dbReference type="ChEBI" id="CHEBI:90039"/>
    </reaction>
</comment>
<comment type="catalytic activity">
    <reaction evidence="1">
        <text>(R)-salsolinol(in) = (R)-salsolinol(out)</text>
        <dbReference type="Rhea" id="RHEA:74791"/>
        <dbReference type="ChEBI" id="CHEBI:194082"/>
    </reaction>
</comment>
<comment type="biophysicochemical properties">
    <kinetics>
        <KM evidence="5">500 uM for serotonin</KM>
        <KM evidence="3">900 uM for agmatine</KM>
        <KM evidence="5">1900 uM for noradrenaline</KM>
        <KM evidence="5">1500 uM for adrenaline</KM>
        <KM evidence="5">1500 uM for dopamine</KM>
        <KM evidence="5">5400 uM for histamine</KM>
        <Vmax evidence="3">8.3 nmol/min/mg enzyme for agmatine uptake</Vmax>
    </kinetics>
    <phDependence>
        <text evidence="11 12">Optimum pH is 8.5 for MPP(+) uptake (PubMed:9830022). Optimum pH is 8.5 for TEA uptake (PubMed:9632645).</text>
    </phDependence>
</comment>
<comment type="subcellular location">
    <subcellularLocation>
        <location evidence="10">Cell membrane</location>
        <topology evidence="15">Multi-pass membrane protein</topology>
    </subcellularLocation>
    <subcellularLocation>
        <location evidence="4">Apical cell membrane</location>
        <topology evidence="15">Multi-pass membrane protein</topology>
    </subcellularLocation>
    <subcellularLocation>
        <location evidence="1">Basolateral cell membrane</location>
        <topology evidence="15">Multi-pass membrane protein</topology>
    </subcellularLocation>
    <subcellularLocation>
        <location evidence="10">Mitochondrion membrane</location>
    </subcellularLocation>
    <subcellularLocation>
        <location evidence="10">Endomembrane system</location>
    </subcellularLocation>
    <subcellularLocation>
        <location evidence="17">Nucleus membrane</location>
    </subcellularLocation>
    <subcellularLocation>
        <location evidence="17">Nucleus outer membrane</location>
    </subcellularLocation>
    <text evidence="4 10">Localized to neuronal and glial plasma membranes (PubMed:27659446). Localized to the luminal/apical membrane of ciliated and brush epithelial cells in the airway (PubMed:15817714). Located to neuronal and glial endomembranes, including mitochondrial and nuclear membranes (PubMed:27659446).</text>
</comment>
<comment type="tissue specificity">
    <text evidence="4 5 6 10 11 12">Highly expressed in placenta (PubMed:9632645, PubMed:9830022). Expressed in intestine, hear, kidney and lung (PubMed:9632645). Widely expressed in brain, particularly in hippocampus, cerebellum, cerebral cortex (PubMed:9632645, PubMed:9830022). In the brain, expressed predominantly in regions located at the brain-cerebrospinal fluid border, with expression extending to regions that belong to monoaminergic pathways such as raphe nuclei, striatum and thalamus (PubMed:16581093). In brain, expressed in neurons and glial cells of amygdala (PubMed:27659446). Expression is low in kidney and lung and undetectable in liver. Expressed in Sertoli cells in testis (PubMed:17616214). Expressed in tracheal and bronchial epithelium of the respiratory tract, where it localizes to the apical membrane of ciliated and brush cells, and in basal cells (PubMed:15817714).</text>
</comment>
<comment type="domain">
    <text evidence="1">Contains one proline-rich sequence (Pro-Glu-Ser-Pro-Arg) that is required for transport activity.</text>
</comment>
<comment type="miscellaneous">
    <text evidence="1 3 5 7 8 9 12">Mediates the uptake of clinically used drugs including neurotoxin 1-methyl-4-phenylpyridinium (MPP(+)) and platinum-based drug oxaliplatin (PubMed:12538837, PubMed:16581093, PubMed:18513366, PubMed:19416912, PubMed:23458604, PubMed:9830022). Plays a role in the anticancer activity of oxaliplatin and may contribute to antitumor specificity (By similarity).</text>
</comment>
<comment type="similarity">
    <text evidence="15">Belongs to the major facilitator (TC 2.A.1) superfamily. Organic cation transporter (TC 2.A.1.19) family.</text>
</comment>
<name>S22A3_RAT</name>
<dbReference type="EMBL" id="AF055286">
    <property type="protein sequence ID" value="AAC40150.1"/>
    <property type="molecule type" value="mRNA"/>
</dbReference>
<dbReference type="RefSeq" id="NP_062103.1">
    <property type="nucleotide sequence ID" value="NM_019230.1"/>
</dbReference>
<dbReference type="SMR" id="O88446"/>
<dbReference type="FunCoup" id="O88446">
    <property type="interactions" value="21"/>
</dbReference>
<dbReference type="STRING" id="10116.ENSRNOP00000029748"/>
<dbReference type="BindingDB" id="O88446"/>
<dbReference type="ChEMBL" id="CHEMBL1770033"/>
<dbReference type="TCDB" id="2.A.1.19.6">
    <property type="family name" value="the major facilitator superfamily (mfs)"/>
</dbReference>
<dbReference type="GlyCosmos" id="O88446">
    <property type="glycosylation" value="5 sites, No reported glycans"/>
</dbReference>
<dbReference type="GlyGen" id="O88446">
    <property type="glycosylation" value="5 sites"/>
</dbReference>
<dbReference type="PhosphoSitePlus" id="O88446"/>
<dbReference type="PaxDb" id="10116-ENSRNOP00000029748"/>
<dbReference type="Ensembl" id="ENSRNOT00000037369.3">
    <property type="protein sequence ID" value="ENSRNOP00000029748.2"/>
    <property type="gene ID" value="ENSRNOG00000022946.3"/>
</dbReference>
<dbReference type="GeneID" id="29504"/>
<dbReference type="KEGG" id="rno:29504"/>
<dbReference type="AGR" id="RGD:3701"/>
<dbReference type="CTD" id="6581"/>
<dbReference type="RGD" id="3701">
    <property type="gene designation" value="Slc22a3"/>
</dbReference>
<dbReference type="eggNOG" id="KOG0255">
    <property type="taxonomic scope" value="Eukaryota"/>
</dbReference>
<dbReference type="GeneTree" id="ENSGT00940000160810"/>
<dbReference type="HOGENOM" id="CLU_001265_33_5_1"/>
<dbReference type="InParanoid" id="O88446"/>
<dbReference type="OMA" id="NYWCRIP"/>
<dbReference type="OrthoDB" id="5141738at2759"/>
<dbReference type="PhylomeDB" id="O88446"/>
<dbReference type="TreeFam" id="TF315847"/>
<dbReference type="Reactome" id="R-RNO-2161517">
    <property type="pathway name" value="Abacavir transmembrane transport"/>
</dbReference>
<dbReference type="Reactome" id="R-RNO-549127">
    <property type="pathway name" value="Organic cation transport"/>
</dbReference>
<dbReference type="SABIO-RK" id="O88446"/>
<dbReference type="PRO" id="PR:O88446"/>
<dbReference type="Proteomes" id="UP000002494">
    <property type="component" value="Chromosome 1"/>
</dbReference>
<dbReference type="Bgee" id="ENSRNOG00000022946">
    <property type="expression patterns" value="Expressed in thymus and 15 other cell types or tissues"/>
</dbReference>
<dbReference type="GO" id="GO:0016324">
    <property type="term" value="C:apical plasma membrane"/>
    <property type="evidence" value="ECO:0000314"/>
    <property type="project" value="UniProtKB"/>
</dbReference>
<dbReference type="GO" id="GO:0016323">
    <property type="term" value="C:basolateral plasma membrane"/>
    <property type="evidence" value="ECO:0000250"/>
    <property type="project" value="UniProtKB"/>
</dbReference>
<dbReference type="GO" id="GO:0012505">
    <property type="term" value="C:endomembrane system"/>
    <property type="evidence" value="ECO:0000314"/>
    <property type="project" value="UniProtKB"/>
</dbReference>
<dbReference type="GO" id="GO:0031966">
    <property type="term" value="C:mitochondrial membrane"/>
    <property type="evidence" value="ECO:0000314"/>
    <property type="project" value="UniProtKB"/>
</dbReference>
<dbReference type="GO" id="GO:0043025">
    <property type="term" value="C:neuronal cell body"/>
    <property type="evidence" value="ECO:0000266"/>
    <property type="project" value="RGD"/>
</dbReference>
<dbReference type="GO" id="GO:0005640">
    <property type="term" value="C:nuclear outer membrane"/>
    <property type="evidence" value="ECO:0007669"/>
    <property type="project" value="UniProtKB-SubCell"/>
</dbReference>
<dbReference type="GO" id="GO:0005886">
    <property type="term" value="C:plasma membrane"/>
    <property type="evidence" value="ECO:0000314"/>
    <property type="project" value="UniProtKB"/>
</dbReference>
<dbReference type="GO" id="GO:0098793">
    <property type="term" value="C:presynapse"/>
    <property type="evidence" value="ECO:0007669"/>
    <property type="project" value="GOC"/>
</dbReference>
<dbReference type="GO" id="GO:0005330">
    <property type="term" value="F:dopamine:sodium symporter activity"/>
    <property type="evidence" value="ECO:0000314"/>
    <property type="project" value="RGD"/>
</dbReference>
<dbReference type="GO" id="GO:0008504">
    <property type="term" value="F:monoamine transmembrane transporter activity"/>
    <property type="evidence" value="ECO:0000314"/>
    <property type="project" value="UniProtKB"/>
</dbReference>
<dbReference type="GO" id="GO:0005326">
    <property type="term" value="F:neurotransmitter transmembrane transporter activity"/>
    <property type="evidence" value="ECO:0000314"/>
    <property type="project" value="UniProtKB"/>
</dbReference>
<dbReference type="GO" id="GO:0008514">
    <property type="term" value="F:organic anion transmembrane transporter activity"/>
    <property type="evidence" value="ECO:0000314"/>
    <property type="project" value="ARUK-UCL"/>
</dbReference>
<dbReference type="GO" id="GO:0015101">
    <property type="term" value="F:organic cation transmembrane transporter activity"/>
    <property type="evidence" value="ECO:0000314"/>
    <property type="project" value="RGD"/>
</dbReference>
<dbReference type="GO" id="GO:0015651">
    <property type="term" value="F:quaternary ammonium group transmembrane transporter activity"/>
    <property type="evidence" value="ECO:0000315"/>
    <property type="project" value="RGD"/>
</dbReference>
<dbReference type="GO" id="GO:0015606">
    <property type="term" value="F:spermidine transmembrane transporter activity"/>
    <property type="evidence" value="ECO:0000314"/>
    <property type="project" value="UniProtKB"/>
</dbReference>
<dbReference type="GO" id="GO:0019534">
    <property type="term" value="F:toxin transmembrane transporter activity"/>
    <property type="evidence" value="ECO:0000314"/>
    <property type="project" value="RGD"/>
</dbReference>
<dbReference type="GO" id="GO:0022857">
    <property type="term" value="F:transmembrane transporter activity"/>
    <property type="evidence" value="ECO:0000266"/>
    <property type="project" value="RGD"/>
</dbReference>
<dbReference type="GO" id="GO:1990748">
    <property type="term" value="P:cellular detoxification"/>
    <property type="evidence" value="ECO:0000266"/>
    <property type="project" value="RGD"/>
</dbReference>
<dbReference type="GO" id="GO:0015872">
    <property type="term" value="P:dopamine transport"/>
    <property type="evidence" value="ECO:0000314"/>
    <property type="project" value="UniProtKB"/>
</dbReference>
<dbReference type="GO" id="GO:0090494">
    <property type="term" value="P:dopamine uptake"/>
    <property type="evidence" value="ECO:0000266"/>
    <property type="project" value="RGD"/>
</dbReference>
<dbReference type="GO" id="GO:0048241">
    <property type="term" value="P:epinephrine transport"/>
    <property type="evidence" value="ECO:0000314"/>
    <property type="project" value="UniProtKB"/>
</dbReference>
<dbReference type="GO" id="GO:0051625">
    <property type="term" value="P:epinephrine uptake"/>
    <property type="evidence" value="ECO:0000266"/>
    <property type="project" value="RGD"/>
</dbReference>
<dbReference type="GO" id="GO:0051649">
    <property type="term" value="P:establishment of localization in cell"/>
    <property type="evidence" value="ECO:0000266"/>
    <property type="project" value="RGD"/>
</dbReference>
<dbReference type="GO" id="GO:0051608">
    <property type="term" value="P:histamine transport"/>
    <property type="evidence" value="ECO:0000314"/>
    <property type="project" value="UniProtKB"/>
</dbReference>
<dbReference type="GO" id="GO:0051615">
    <property type="term" value="P:histamine uptake"/>
    <property type="evidence" value="ECO:0000266"/>
    <property type="project" value="RGD"/>
</dbReference>
<dbReference type="GO" id="GO:0015844">
    <property type="term" value="P:monoamine transport"/>
    <property type="evidence" value="ECO:0000266"/>
    <property type="project" value="RGD"/>
</dbReference>
<dbReference type="GO" id="GO:0015718">
    <property type="term" value="P:monocarboxylic acid transport"/>
    <property type="evidence" value="ECO:0000266"/>
    <property type="project" value="RGD"/>
</dbReference>
<dbReference type="GO" id="GO:0006836">
    <property type="term" value="P:neurotransmitter transport"/>
    <property type="evidence" value="ECO:0000266"/>
    <property type="project" value="RGD"/>
</dbReference>
<dbReference type="GO" id="GO:0015874">
    <property type="term" value="P:norepinephrine transport"/>
    <property type="evidence" value="ECO:0000314"/>
    <property type="project" value="UniProtKB"/>
</dbReference>
<dbReference type="GO" id="GO:0051620">
    <property type="term" value="P:norepinephrine uptake"/>
    <property type="evidence" value="ECO:0000266"/>
    <property type="project" value="RGD"/>
</dbReference>
<dbReference type="GO" id="GO:0015711">
    <property type="term" value="P:organic anion transport"/>
    <property type="evidence" value="ECO:0000314"/>
    <property type="project" value="ARUK-UCL"/>
</dbReference>
<dbReference type="GO" id="GO:0015695">
    <property type="term" value="P:organic cation transport"/>
    <property type="evidence" value="ECO:0000314"/>
    <property type="project" value="RGD"/>
</dbReference>
<dbReference type="GO" id="GO:0015850">
    <property type="term" value="P:organic hydroxy compound transport"/>
    <property type="evidence" value="ECO:0000266"/>
    <property type="project" value="RGD"/>
</dbReference>
<dbReference type="GO" id="GO:0015697">
    <property type="term" value="P:quaternary ammonium group transport"/>
    <property type="evidence" value="ECO:0000315"/>
    <property type="project" value="RGD"/>
</dbReference>
<dbReference type="GO" id="GO:0032098">
    <property type="term" value="P:regulation of appetite"/>
    <property type="evidence" value="ECO:0000266"/>
    <property type="project" value="RGD"/>
</dbReference>
<dbReference type="GO" id="GO:0006837">
    <property type="term" value="P:serotonin transport"/>
    <property type="evidence" value="ECO:0000314"/>
    <property type="project" value="UniProtKB"/>
</dbReference>
<dbReference type="GO" id="GO:0051610">
    <property type="term" value="P:serotonin uptake"/>
    <property type="evidence" value="ECO:0000266"/>
    <property type="project" value="RGD"/>
</dbReference>
<dbReference type="GO" id="GO:0015848">
    <property type="term" value="P:spermidine transport"/>
    <property type="evidence" value="ECO:0000314"/>
    <property type="project" value="UniProtKB"/>
</dbReference>
<dbReference type="GO" id="GO:0042908">
    <property type="term" value="P:xenobiotic transport"/>
    <property type="evidence" value="ECO:0000266"/>
    <property type="project" value="RGD"/>
</dbReference>
<dbReference type="CDD" id="cd17379">
    <property type="entry name" value="MFS_SLC22A1_2_3"/>
    <property type="match status" value="1"/>
</dbReference>
<dbReference type="FunFam" id="1.20.1250.20:FF:000165">
    <property type="entry name" value="Solute carrier family 22 member 3"/>
    <property type="match status" value="1"/>
</dbReference>
<dbReference type="Gene3D" id="1.20.1250.20">
    <property type="entry name" value="MFS general substrate transporter like domains"/>
    <property type="match status" value="1"/>
</dbReference>
<dbReference type="InterPro" id="IPR020846">
    <property type="entry name" value="MFS_dom"/>
</dbReference>
<dbReference type="InterPro" id="IPR005828">
    <property type="entry name" value="MFS_sugar_transport-like"/>
</dbReference>
<dbReference type="InterPro" id="IPR036259">
    <property type="entry name" value="MFS_trans_sf"/>
</dbReference>
<dbReference type="InterPro" id="IPR004749">
    <property type="entry name" value="Orgcat_transp/SVOP"/>
</dbReference>
<dbReference type="InterPro" id="IPR005829">
    <property type="entry name" value="Sugar_transporter_CS"/>
</dbReference>
<dbReference type="NCBIfam" id="TIGR00898">
    <property type="entry name" value="2A0119"/>
    <property type="match status" value="1"/>
</dbReference>
<dbReference type="PANTHER" id="PTHR24064">
    <property type="entry name" value="SOLUTE CARRIER FAMILY 22 MEMBER"/>
    <property type="match status" value="1"/>
</dbReference>
<dbReference type="Pfam" id="PF00083">
    <property type="entry name" value="Sugar_tr"/>
    <property type="match status" value="1"/>
</dbReference>
<dbReference type="SUPFAM" id="SSF103473">
    <property type="entry name" value="MFS general substrate transporter"/>
    <property type="match status" value="1"/>
</dbReference>
<dbReference type="PROSITE" id="PS50850">
    <property type="entry name" value="MFS"/>
    <property type="match status" value="1"/>
</dbReference>
<dbReference type="PROSITE" id="PS00216">
    <property type="entry name" value="SUGAR_TRANSPORT_1"/>
    <property type="match status" value="1"/>
</dbReference>
<sequence>MPTFDQALRKAGEFGRFQRRVFLLLCLTGVTFAFLFVGVVFLGSQPDYYWCRGPRATALAERCAWSPEEEWNLTTPELHVPAERRGQGHCHRYLLEDTNTSSELSCDPLAAFPNRSAPLVPCSGDWRYVETHSTIVSQFDLVCGNAWMLDLTQAILNLGFLAGAFTLGYAADRYGRLIVYLISCFGVGITGVVVAFAPNFSVFVIFRFLQGVFGKGAWMTCFVIVTEIVGSKQRRIVGIVIQMFFTLGIIILPGIAYFTPSWQGIQLAISLPSFLFLLYYWVVPESPRWLITRKQGEKALQILRRVAKCNGKHLSSNYSEITVTDEEVSNPSCLDLVRTPQMRKCTLILMFAWFTSAVVYQGLVMRLGLIGGNLYMDFFISGLVELPGALLILLTIERLGRRLPFAASNIVAGVSCLVTAFLPEGIPWLRTTVATLGRLGITMAFEIVYLVNSELYPTTLRNFGVSLCSGLCDFGGIIAPFLLFRLAAIWLELPLIIFGILASVCGGLVMLLPETKGIALPETVEDVEKLGSSQLHQCGRKKKTQVSTSNV</sequence>
<protein>
    <recommendedName>
        <fullName evidence="1">Solute carrier family 22 member 3</fullName>
    </recommendedName>
    <alternativeName>
        <fullName evidence="13">Extraneuronal monoamine transporter</fullName>
        <shortName evidence="13">EMT</shortName>
    </alternativeName>
    <alternativeName>
        <fullName evidence="14">Organic cation transporter 3</fullName>
        <shortName evidence="14">OCT3</shortName>
    </alternativeName>
</protein>
<keyword id="KW-1003">Cell membrane</keyword>
<keyword id="KW-0325">Glycoprotein</keyword>
<keyword id="KW-0406">Ion transport</keyword>
<keyword id="KW-0472">Membrane</keyword>
<keyword id="KW-0496">Mitochondrion</keyword>
<keyword id="KW-0539">Nucleus</keyword>
<keyword id="KW-1185">Reference proteome</keyword>
<keyword id="KW-0812">Transmembrane</keyword>
<keyword id="KW-1133">Transmembrane helix</keyword>
<keyword id="KW-0813">Transport</keyword>
<feature type="chain" id="PRO_0000220505" description="Solute carrier family 22 member 3">
    <location>
        <begin position="1"/>
        <end position="551"/>
    </location>
</feature>
<feature type="transmembrane region" description="Helical" evidence="2">
    <location>
        <begin position="21"/>
        <end position="41"/>
    </location>
</feature>
<feature type="transmembrane region" description="Helical" evidence="2">
    <location>
        <begin position="177"/>
        <end position="197"/>
    </location>
</feature>
<feature type="transmembrane region" description="Helical" evidence="2">
    <location>
        <begin position="236"/>
        <end position="256"/>
    </location>
</feature>
<feature type="transmembrane region" description="Helical" evidence="2">
    <location>
        <begin position="264"/>
        <end position="284"/>
    </location>
</feature>
<feature type="transmembrane region" description="Helical" evidence="2">
    <location>
        <begin position="376"/>
        <end position="396"/>
    </location>
</feature>
<feature type="transmembrane region" description="Helical" evidence="2">
    <location>
        <begin position="463"/>
        <end position="483"/>
    </location>
</feature>
<feature type="transmembrane region" description="Helical" evidence="2">
    <location>
        <begin position="493"/>
        <end position="513"/>
    </location>
</feature>
<feature type="short sequence motif" description="Proline-rich sequence" evidence="1">
    <location>
        <begin position="284"/>
        <end position="288"/>
    </location>
</feature>
<feature type="glycosylation site" description="N-linked (GlcNAc...) asparagine" evidence="2">
    <location>
        <position position="72"/>
    </location>
</feature>
<feature type="glycosylation site" description="N-linked (GlcNAc...) asparagine" evidence="2">
    <location>
        <position position="99"/>
    </location>
</feature>
<feature type="glycosylation site" description="N-linked (GlcNAc...) asparagine" evidence="2">
    <location>
        <position position="114"/>
    </location>
</feature>
<feature type="glycosylation site" description="N-linked (GlcNAc...) asparagine" evidence="2">
    <location>
        <position position="199"/>
    </location>
</feature>
<feature type="glycosylation site" description="N-linked (GlcNAc...) asparagine" evidence="2">
    <location>
        <position position="317"/>
    </location>
</feature>